<organism>
    <name type="scientific">Caldicellulosiruptor saccharolyticus (strain ATCC 43494 / DSM 8903 / Tp8T 6331)</name>
    <dbReference type="NCBI Taxonomy" id="351627"/>
    <lineage>
        <taxon>Bacteria</taxon>
        <taxon>Bacillati</taxon>
        <taxon>Bacillota</taxon>
        <taxon>Bacillota incertae sedis</taxon>
        <taxon>Caldicellulosiruptorales</taxon>
        <taxon>Caldicellulosiruptoraceae</taxon>
        <taxon>Caldicellulosiruptor</taxon>
    </lineage>
</organism>
<feature type="chain" id="PRO_0000309890" description="Large ribosomal subunit protein uL2">
    <location>
        <begin position="1"/>
        <end position="276"/>
    </location>
</feature>
<feature type="region of interest" description="Disordered" evidence="2">
    <location>
        <begin position="223"/>
        <end position="276"/>
    </location>
</feature>
<feature type="compositionally biased region" description="Basic and acidic residues" evidence="2">
    <location>
        <begin position="265"/>
        <end position="276"/>
    </location>
</feature>
<comment type="function">
    <text evidence="1">One of the primary rRNA binding proteins. Required for association of the 30S and 50S subunits to form the 70S ribosome, for tRNA binding and peptide bond formation. It has been suggested to have peptidyltransferase activity; this is somewhat controversial. Makes several contacts with the 16S rRNA in the 70S ribosome.</text>
</comment>
<comment type="subunit">
    <text evidence="1">Part of the 50S ribosomal subunit. Forms a bridge to the 30S subunit in the 70S ribosome.</text>
</comment>
<comment type="similarity">
    <text evidence="1">Belongs to the universal ribosomal protein uL2 family.</text>
</comment>
<dbReference type="EMBL" id="CP000679">
    <property type="protein sequence ID" value="ABP67862.1"/>
    <property type="molecule type" value="Genomic_DNA"/>
</dbReference>
<dbReference type="RefSeq" id="WP_011917788.1">
    <property type="nucleotide sequence ID" value="NC_009437.1"/>
</dbReference>
<dbReference type="SMR" id="A4XLS7"/>
<dbReference type="STRING" id="351627.Csac_2284"/>
<dbReference type="KEGG" id="csc:Csac_2284"/>
<dbReference type="eggNOG" id="COG0090">
    <property type="taxonomic scope" value="Bacteria"/>
</dbReference>
<dbReference type="HOGENOM" id="CLU_036235_2_1_9"/>
<dbReference type="OrthoDB" id="9778722at2"/>
<dbReference type="Proteomes" id="UP000000256">
    <property type="component" value="Chromosome"/>
</dbReference>
<dbReference type="GO" id="GO:0015934">
    <property type="term" value="C:large ribosomal subunit"/>
    <property type="evidence" value="ECO:0007669"/>
    <property type="project" value="InterPro"/>
</dbReference>
<dbReference type="GO" id="GO:0019843">
    <property type="term" value="F:rRNA binding"/>
    <property type="evidence" value="ECO:0007669"/>
    <property type="project" value="UniProtKB-UniRule"/>
</dbReference>
<dbReference type="GO" id="GO:0003735">
    <property type="term" value="F:structural constituent of ribosome"/>
    <property type="evidence" value="ECO:0007669"/>
    <property type="project" value="InterPro"/>
</dbReference>
<dbReference type="GO" id="GO:0016740">
    <property type="term" value="F:transferase activity"/>
    <property type="evidence" value="ECO:0007669"/>
    <property type="project" value="InterPro"/>
</dbReference>
<dbReference type="GO" id="GO:0002181">
    <property type="term" value="P:cytoplasmic translation"/>
    <property type="evidence" value="ECO:0007669"/>
    <property type="project" value="TreeGrafter"/>
</dbReference>
<dbReference type="FunFam" id="2.30.30.30:FF:000001">
    <property type="entry name" value="50S ribosomal protein L2"/>
    <property type="match status" value="1"/>
</dbReference>
<dbReference type="FunFam" id="2.40.50.140:FF:000003">
    <property type="entry name" value="50S ribosomal protein L2"/>
    <property type="match status" value="1"/>
</dbReference>
<dbReference type="FunFam" id="4.10.950.10:FF:000001">
    <property type="entry name" value="50S ribosomal protein L2"/>
    <property type="match status" value="1"/>
</dbReference>
<dbReference type="Gene3D" id="2.30.30.30">
    <property type="match status" value="1"/>
</dbReference>
<dbReference type="Gene3D" id="2.40.50.140">
    <property type="entry name" value="Nucleic acid-binding proteins"/>
    <property type="match status" value="1"/>
</dbReference>
<dbReference type="Gene3D" id="4.10.950.10">
    <property type="entry name" value="Ribosomal protein L2, domain 3"/>
    <property type="match status" value="1"/>
</dbReference>
<dbReference type="HAMAP" id="MF_01320_B">
    <property type="entry name" value="Ribosomal_uL2_B"/>
    <property type="match status" value="1"/>
</dbReference>
<dbReference type="InterPro" id="IPR012340">
    <property type="entry name" value="NA-bd_OB-fold"/>
</dbReference>
<dbReference type="InterPro" id="IPR014722">
    <property type="entry name" value="Rib_uL2_dom2"/>
</dbReference>
<dbReference type="InterPro" id="IPR002171">
    <property type="entry name" value="Ribosomal_uL2"/>
</dbReference>
<dbReference type="InterPro" id="IPR005880">
    <property type="entry name" value="Ribosomal_uL2_bac/org-type"/>
</dbReference>
<dbReference type="InterPro" id="IPR022669">
    <property type="entry name" value="Ribosomal_uL2_C"/>
</dbReference>
<dbReference type="InterPro" id="IPR022671">
    <property type="entry name" value="Ribosomal_uL2_CS"/>
</dbReference>
<dbReference type="InterPro" id="IPR014726">
    <property type="entry name" value="Ribosomal_uL2_dom3"/>
</dbReference>
<dbReference type="InterPro" id="IPR022666">
    <property type="entry name" value="Ribosomal_uL2_RNA-bd_dom"/>
</dbReference>
<dbReference type="InterPro" id="IPR008991">
    <property type="entry name" value="Translation_prot_SH3-like_sf"/>
</dbReference>
<dbReference type="NCBIfam" id="TIGR01171">
    <property type="entry name" value="rplB_bact"/>
    <property type="match status" value="1"/>
</dbReference>
<dbReference type="PANTHER" id="PTHR13691:SF5">
    <property type="entry name" value="LARGE RIBOSOMAL SUBUNIT PROTEIN UL2M"/>
    <property type="match status" value="1"/>
</dbReference>
<dbReference type="PANTHER" id="PTHR13691">
    <property type="entry name" value="RIBOSOMAL PROTEIN L2"/>
    <property type="match status" value="1"/>
</dbReference>
<dbReference type="Pfam" id="PF00181">
    <property type="entry name" value="Ribosomal_L2"/>
    <property type="match status" value="1"/>
</dbReference>
<dbReference type="Pfam" id="PF03947">
    <property type="entry name" value="Ribosomal_L2_C"/>
    <property type="match status" value="1"/>
</dbReference>
<dbReference type="PIRSF" id="PIRSF002158">
    <property type="entry name" value="Ribosomal_L2"/>
    <property type="match status" value="1"/>
</dbReference>
<dbReference type="SMART" id="SM01383">
    <property type="entry name" value="Ribosomal_L2"/>
    <property type="match status" value="1"/>
</dbReference>
<dbReference type="SMART" id="SM01382">
    <property type="entry name" value="Ribosomal_L2_C"/>
    <property type="match status" value="1"/>
</dbReference>
<dbReference type="SUPFAM" id="SSF50249">
    <property type="entry name" value="Nucleic acid-binding proteins"/>
    <property type="match status" value="1"/>
</dbReference>
<dbReference type="SUPFAM" id="SSF50104">
    <property type="entry name" value="Translation proteins SH3-like domain"/>
    <property type="match status" value="1"/>
</dbReference>
<dbReference type="PROSITE" id="PS00467">
    <property type="entry name" value="RIBOSOMAL_L2"/>
    <property type="match status" value="1"/>
</dbReference>
<proteinExistence type="inferred from homology"/>
<keyword id="KW-0687">Ribonucleoprotein</keyword>
<keyword id="KW-0689">Ribosomal protein</keyword>
<keyword id="KW-0694">RNA-binding</keyword>
<keyword id="KW-0699">rRNA-binding</keyword>
<evidence type="ECO:0000255" key="1">
    <source>
        <dbReference type="HAMAP-Rule" id="MF_01320"/>
    </source>
</evidence>
<evidence type="ECO:0000256" key="2">
    <source>
        <dbReference type="SAM" id="MobiDB-lite"/>
    </source>
</evidence>
<evidence type="ECO:0000305" key="3"/>
<name>RL2_CALS8</name>
<protein>
    <recommendedName>
        <fullName evidence="1">Large ribosomal subunit protein uL2</fullName>
    </recommendedName>
    <alternativeName>
        <fullName evidence="3">50S ribosomal protein L2</fullName>
    </alternativeName>
</protein>
<sequence length="276" mass="30444">MGIIVYKPTSPGRRNASVLNYKEIITKTEPEKSLVFTEKKWAGRNNQGRITVRHRGGGHKKKIRIVDFKRDKDGIPAKVEAIEYDPNRTAFLALLCYADGERRYILAPEGLKVGDTVMSGPDADIKVGNALPLKYIPVGTMIHNIELYPGRGGQLVKSAGAVAQLMAKEGKYALIRLPSGELRYVSQECRATIGQVGNLDHENVRIGKAGRKRWMGIRPTVRGSAMNPVDHPHGGGEGKAPIGHPGPLTPWGKPTLGYKTRKKNKPSDKFIVKRRK</sequence>
<accession>A4XLS7</accession>
<gene>
    <name evidence="1" type="primary">rplB</name>
    <name type="ordered locus">Csac_2284</name>
</gene>
<reference key="1">
    <citation type="submission" date="2007-04" db="EMBL/GenBank/DDBJ databases">
        <title>Genome sequence of the thermophilic hydrogen-producing bacterium Caldicellulosiruptor saccharolyticus DSM 8903.</title>
        <authorList>
            <person name="Copeland A."/>
            <person name="Lucas S."/>
            <person name="Lapidus A."/>
            <person name="Barry K."/>
            <person name="Detter J.C."/>
            <person name="Glavina del Rio T."/>
            <person name="Hammon N."/>
            <person name="Israni S."/>
            <person name="Dalin E."/>
            <person name="Tice H."/>
            <person name="Pitluck S."/>
            <person name="Kiss H."/>
            <person name="Brettin T."/>
            <person name="Bruce D."/>
            <person name="Han C."/>
            <person name="Schmutz J."/>
            <person name="Larimer F."/>
            <person name="Land M."/>
            <person name="Hauser L."/>
            <person name="Kyrpides N."/>
            <person name="Lykidis A."/>
            <person name="van de Werken H.J.G."/>
            <person name="Verhaart M.R.A."/>
            <person name="VanFossen A.L."/>
            <person name="Lewis D.L."/>
            <person name="Nichols J.D."/>
            <person name="Goorissen H.P."/>
            <person name="van Niel E.W.J."/>
            <person name="Stams F.J.M."/>
            <person name="Willquist K.U."/>
            <person name="Ward D.E."/>
            <person name="van der Oost J."/>
            <person name="Kelly R.M."/>
            <person name="Kengen S.M.W."/>
            <person name="Richardson P."/>
        </authorList>
    </citation>
    <scope>NUCLEOTIDE SEQUENCE [LARGE SCALE GENOMIC DNA]</scope>
    <source>
        <strain>ATCC 43494 / DSM 8903 / Tp8T 6331</strain>
    </source>
</reference>